<reference key="1">
    <citation type="submission" date="2009-01" db="EMBL/GenBank/DDBJ databases">
        <title>Complete sequence of Geobacter sp. FRC-32.</title>
        <authorList>
            <consortium name="US DOE Joint Genome Institute"/>
            <person name="Lucas S."/>
            <person name="Copeland A."/>
            <person name="Lapidus A."/>
            <person name="Glavina del Rio T."/>
            <person name="Dalin E."/>
            <person name="Tice H."/>
            <person name="Bruce D."/>
            <person name="Goodwin L."/>
            <person name="Pitluck S."/>
            <person name="Saunders E."/>
            <person name="Brettin T."/>
            <person name="Detter J.C."/>
            <person name="Han C."/>
            <person name="Larimer F."/>
            <person name="Land M."/>
            <person name="Hauser L."/>
            <person name="Kyrpides N."/>
            <person name="Ovchinnikova G."/>
            <person name="Kostka J."/>
            <person name="Richardson P."/>
        </authorList>
    </citation>
    <scope>NUCLEOTIDE SEQUENCE [LARGE SCALE GENOMIC DNA]</scope>
    <source>
        <strain>DSM 22248 / JCM 15807 / FRC-32</strain>
    </source>
</reference>
<gene>
    <name evidence="1" type="primary">plsY</name>
    <name type="ordered locus">Geob_0816</name>
</gene>
<comment type="function">
    <text evidence="1">Catalyzes the transfer of an acyl group from acyl-phosphate (acyl-PO(4)) to glycerol-3-phosphate (G3P) to form lysophosphatidic acid (LPA). This enzyme utilizes acyl-phosphate as fatty acyl donor, but not acyl-CoA or acyl-ACP.</text>
</comment>
<comment type="catalytic activity">
    <reaction evidence="1">
        <text>an acyl phosphate + sn-glycerol 3-phosphate = a 1-acyl-sn-glycero-3-phosphate + phosphate</text>
        <dbReference type="Rhea" id="RHEA:34075"/>
        <dbReference type="ChEBI" id="CHEBI:43474"/>
        <dbReference type="ChEBI" id="CHEBI:57597"/>
        <dbReference type="ChEBI" id="CHEBI:57970"/>
        <dbReference type="ChEBI" id="CHEBI:59918"/>
        <dbReference type="EC" id="2.3.1.275"/>
    </reaction>
</comment>
<comment type="pathway">
    <text evidence="1">Lipid metabolism; phospholipid metabolism.</text>
</comment>
<comment type="subunit">
    <text evidence="1">Probably interacts with PlsX.</text>
</comment>
<comment type="subcellular location">
    <subcellularLocation>
        <location evidence="1">Cell inner membrane</location>
        <topology evidence="1">Multi-pass membrane protein</topology>
    </subcellularLocation>
</comment>
<comment type="similarity">
    <text evidence="1">Belongs to the PlsY family.</text>
</comment>
<keyword id="KW-0997">Cell inner membrane</keyword>
<keyword id="KW-1003">Cell membrane</keyword>
<keyword id="KW-0444">Lipid biosynthesis</keyword>
<keyword id="KW-0443">Lipid metabolism</keyword>
<keyword id="KW-0472">Membrane</keyword>
<keyword id="KW-0594">Phospholipid biosynthesis</keyword>
<keyword id="KW-1208">Phospholipid metabolism</keyword>
<keyword id="KW-1185">Reference proteome</keyword>
<keyword id="KW-0808">Transferase</keyword>
<keyword id="KW-0812">Transmembrane</keyword>
<keyword id="KW-1133">Transmembrane helix</keyword>
<proteinExistence type="inferred from homology"/>
<sequence>MTSEIVLIIGAYLLGSIPTGLLLAKAVGVDIRTTGSGNIGATNVYRTLGRRVGIMTLIGDCLKGLIPVLIARHLQLPEIWVAATGLAAFLGHVYTVFLRFKGGKGVATALGVFIGISPLSVLAALAIFVFTLIKWRYVSLASITAAAAIPFLVALIEKKGLLITMSVIIAALVVFKHRENIRRLRSGTENVFKR</sequence>
<feature type="chain" id="PRO_1000149572" description="Glycerol-3-phosphate acyltransferase">
    <location>
        <begin position="1"/>
        <end position="194"/>
    </location>
</feature>
<feature type="transmembrane region" description="Helical" evidence="1">
    <location>
        <begin position="4"/>
        <end position="24"/>
    </location>
</feature>
<feature type="transmembrane region" description="Helical" evidence="1">
    <location>
        <begin position="78"/>
        <end position="98"/>
    </location>
</feature>
<feature type="transmembrane region" description="Helical" evidence="1">
    <location>
        <begin position="110"/>
        <end position="130"/>
    </location>
</feature>
<feature type="transmembrane region" description="Helical" evidence="1">
    <location>
        <begin position="137"/>
        <end position="157"/>
    </location>
</feature>
<feature type="transmembrane region" description="Helical" evidence="1">
    <location>
        <begin position="161"/>
        <end position="181"/>
    </location>
</feature>
<accession>B9M1A8</accession>
<name>PLSY_GEODF</name>
<evidence type="ECO:0000255" key="1">
    <source>
        <dbReference type="HAMAP-Rule" id="MF_01043"/>
    </source>
</evidence>
<dbReference type="EC" id="2.3.1.275" evidence="1"/>
<dbReference type="EMBL" id="CP001390">
    <property type="protein sequence ID" value="ACM19178.1"/>
    <property type="molecule type" value="Genomic_DNA"/>
</dbReference>
<dbReference type="RefSeq" id="WP_012645907.1">
    <property type="nucleotide sequence ID" value="NC_011979.1"/>
</dbReference>
<dbReference type="SMR" id="B9M1A8"/>
<dbReference type="STRING" id="316067.Geob_0816"/>
<dbReference type="KEGG" id="geo:Geob_0816"/>
<dbReference type="eggNOG" id="COG0344">
    <property type="taxonomic scope" value="Bacteria"/>
</dbReference>
<dbReference type="HOGENOM" id="CLU_081254_0_0_7"/>
<dbReference type="OrthoDB" id="9777124at2"/>
<dbReference type="UniPathway" id="UPA00085"/>
<dbReference type="Proteomes" id="UP000007721">
    <property type="component" value="Chromosome"/>
</dbReference>
<dbReference type="GO" id="GO:0005886">
    <property type="term" value="C:plasma membrane"/>
    <property type="evidence" value="ECO:0007669"/>
    <property type="project" value="UniProtKB-SubCell"/>
</dbReference>
<dbReference type="GO" id="GO:0043772">
    <property type="term" value="F:acyl-phosphate glycerol-3-phosphate acyltransferase activity"/>
    <property type="evidence" value="ECO:0007669"/>
    <property type="project" value="UniProtKB-UniRule"/>
</dbReference>
<dbReference type="GO" id="GO:0008654">
    <property type="term" value="P:phospholipid biosynthetic process"/>
    <property type="evidence" value="ECO:0007669"/>
    <property type="project" value="UniProtKB-UniRule"/>
</dbReference>
<dbReference type="HAMAP" id="MF_01043">
    <property type="entry name" value="PlsY"/>
    <property type="match status" value="1"/>
</dbReference>
<dbReference type="InterPro" id="IPR003811">
    <property type="entry name" value="G3P_acylTferase_PlsY"/>
</dbReference>
<dbReference type="NCBIfam" id="TIGR00023">
    <property type="entry name" value="glycerol-3-phosphate 1-O-acyltransferase PlsY"/>
    <property type="match status" value="1"/>
</dbReference>
<dbReference type="PANTHER" id="PTHR30309:SF0">
    <property type="entry name" value="GLYCEROL-3-PHOSPHATE ACYLTRANSFERASE-RELATED"/>
    <property type="match status" value="1"/>
</dbReference>
<dbReference type="PANTHER" id="PTHR30309">
    <property type="entry name" value="INNER MEMBRANE PROTEIN YGIH"/>
    <property type="match status" value="1"/>
</dbReference>
<dbReference type="Pfam" id="PF02660">
    <property type="entry name" value="G3P_acyltransf"/>
    <property type="match status" value="1"/>
</dbReference>
<dbReference type="SMART" id="SM01207">
    <property type="entry name" value="G3P_acyltransf"/>
    <property type="match status" value="1"/>
</dbReference>
<protein>
    <recommendedName>
        <fullName evidence="1">Glycerol-3-phosphate acyltransferase</fullName>
    </recommendedName>
    <alternativeName>
        <fullName evidence="1">Acyl-PO4 G3P acyltransferase</fullName>
    </alternativeName>
    <alternativeName>
        <fullName evidence="1">Acyl-phosphate--glycerol-3-phosphate acyltransferase</fullName>
    </alternativeName>
    <alternativeName>
        <fullName evidence="1">G3P acyltransferase</fullName>
        <shortName evidence="1">GPAT</shortName>
        <ecNumber evidence="1">2.3.1.275</ecNumber>
    </alternativeName>
    <alternativeName>
        <fullName evidence="1">Lysophosphatidic acid synthase</fullName>
        <shortName evidence="1">LPA synthase</shortName>
    </alternativeName>
</protein>
<organism>
    <name type="scientific">Geotalea daltonii (strain DSM 22248 / JCM 15807 / FRC-32)</name>
    <name type="common">Geobacter daltonii</name>
    <dbReference type="NCBI Taxonomy" id="316067"/>
    <lineage>
        <taxon>Bacteria</taxon>
        <taxon>Pseudomonadati</taxon>
        <taxon>Thermodesulfobacteriota</taxon>
        <taxon>Desulfuromonadia</taxon>
        <taxon>Geobacterales</taxon>
        <taxon>Geobacteraceae</taxon>
        <taxon>Geotalea</taxon>
    </lineage>
</organism>